<proteinExistence type="inferred from homology"/>
<sequence length="199" mass="22492">MAEEQVLNTHNASILLSAANKSHYPQDDLPEIALAGRSNVGKSSFINTILGRKNLARTSSKPGKTQLLNFFNIDNKLRFVDVPGYGYAKVSKSERAKWGKMIEEYLTSRDNLRAVVSLVDLRHAPSKEDIQMYDFLKYYDIPVIVVATKADKIPRGKWNKHESVVKKALNFDKSDTFIVFSSVERIGIDDSWDAILEQV</sequence>
<evidence type="ECO:0000255" key="1">
    <source>
        <dbReference type="HAMAP-Rule" id="MF_00321"/>
    </source>
</evidence>
<protein>
    <recommendedName>
        <fullName evidence="1">Probable GTP-binding protein EngB</fullName>
    </recommendedName>
</protein>
<organism>
    <name type="scientific">Streptococcus pyogenes serotype M5 (strain Manfredo)</name>
    <dbReference type="NCBI Taxonomy" id="160491"/>
    <lineage>
        <taxon>Bacteria</taxon>
        <taxon>Bacillati</taxon>
        <taxon>Bacillota</taxon>
        <taxon>Bacilli</taxon>
        <taxon>Lactobacillales</taxon>
        <taxon>Streptococcaceae</taxon>
        <taxon>Streptococcus</taxon>
    </lineage>
</organism>
<reference key="1">
    <citation type="journal article" date="2007" name="J. Bacteriol.">
        <title>Complete genome of acute rheumatic fever-associated serotype M5 Streptococcus pyogenes strain Manfredo.</title>
        <authorList>
            <person name="Holden M.T.G."/>
            <person name="Scott A."/>
            <person name="Cherevach I."/>
            <person name="Chillingworth T."/>
            <person name="Churcher C."/>
            <person name="Cronin A."/>
            <person name="Dowd L."/>
            <person name="Feltwell T."/>
            <person name="Hamlin N."/>
            <person name="Holroyd S."/>
            <person name="Jagels K."/>
            <person name="Moule S."/>
            <person name="Mungall K."/>
            <person name="Quail M.A."/>
            <person name="Price C."/>
            <person name="Rabbinowitsch E."/>
            <person name="Sharp S."/>
            <person name="Skelton J."/>
            <person name="Whitehead S."/>
            <person name="Barrell B.G."/>
            <person name="Kehoe M."/>
            <person name="Parkhill J."/>
        </authorList>
    </citation>
    <scope>NUCLEOTIDE SEQUENCE [LARGE SCALE GENOMIC DNA]</scope>
    <source>
        <strain>Manfredo</strain>
    </source>
</reference>
<feature type="chain" id="PRO_1000005862" description="Probable GTP-binding protein EngB">
    <location>
        <begin position="1"/>
        <end position="199"/>
    </location>
</feature>
<feature type="domain" description="EngB-type G" evidence="1">
    <location>
        <begin position="28"/>
        <end position="199"/>
    </location>
</feature>
<feature type="binding site" evidence="1">
    <location>
        <begin position="36"/>
        <end position="43"/>
    </location>
    <ligand>
        <name>GTP</name>
        <dbReference type="ChEBI" id="CHEBI:37565"/>
    </ligand>
</feature>
<feature type="binding site" evidence="1">
    <location>
        <position position="43"/>
    </location>
    <ligand>
        <name>Mg(2+)</name>
        <dbReference type="ChEBI" id="CHEBI:18420"/>
    </ligand>
</feature>
<feature type="binding site" evidence="1">
    <location>
        <begin position="63"/>
        <end position="67"/>
    </location>
    <ligand>
        <name>GTP</name>
        <dbReference type="ChEBI" id="CHEBI:37565"/>
    </ligand>
</feature>
<feature type="binding site" evidence="1">
    <location>
        <position position="65"/>
    </location>
    <ligand>
        <name>Mg(2+)</name>
        <dbReference type="ChEBI" id="CHEBI:18420"/>
    </ligand>
</feature>
<feature type="binding site" evidence="1">
    <location>
        <begin position="81"/>
        <end position="84"/>
    </location>
    <ligand>
        <name>GTP</name>
        <dbReference type="ChEBI" id="CHEBI:37565"/>
    </ligand>
</feature>
<feature type="binding site" evidence="1">
    <location>
        <begin position="148"/>
        <end position="151"/>
    </location>
    <ligand>
        <name>GTP</name>
        <dbReference type="ChEBI" id="CHEBI:37565"/>
    </ligand>
</feature>
<feature type="binding site" evidence="1">
    <location>
        <begin position="180"/>
        <end position="182"/>
    </location>
    <ligand>
        <name>GTP</name>
        <dbReference type="ChEBI" id="CHEBI:37565"/>
    </ligand>
</feature>
<keyword id="KW-0131">Cell cycle</keyword>
<keyword id="KW-0132">Cell division</keyword>
<keyword id="KW-0342">GTP-binding</keyword>
<keyword id="KW-0460">Magnesium</keyword>
<keyword id="KW-0479">Metal-binding</keyword>
<keyword id="KW-0547">Nucleotide-binding</keyword>
<keyword id="KW-0717">Septation</keyword>
<name>ENGB_STRPG</name>
<comment type="function">
    <text evidence="1">Necessary for normal cell division and for the maintenance of normal septation.</text>
</comment>
<comment type="cofactor">
    <cofactor evidence="1">
        <name>Mg(2+)</name>
        <dbReference type="ChEBI" id="CHEBI:18420"/>
    </cofactor>
</comment>
<comment type="similarity">
    <text evidence="1">Belongs to the TRAFAC class TrmE-Era-EngA-EngB-Septin-like GTPase superfamily. EngB GTPase family.</text>
</comment>
<dbReference type="EMBL" id="AM295007">
    <property type="protein sequence ID" value="CAM30442.1"/>
    <property type="molecule type" value="Genomic_DNA"/>
</dbReference>
<dbReference type="SMR" id="A2RF16"/>
<dbReference type="KEGG" id="spf:SpyM51116"/>
<dbReference type="HOGENOM" id="CLU_033732_3_0_9"/>
<dbReference type="GO" id="GO:0005829">
    <property type="term" value="C:cytosol"/>
    <property type="evidence" value="ECO:0007669"/>
    <property type="project" value="TreeGrafter"/>
</dbReference>
<dbReference type="GO" id="GO:0005525">
    <property type="term" value="F:GTP binding"/>
    <property type="evidence" value="ECO:0007669"/>
    <property type="project" value="UniProtKB-UniRule"/>
</dbReference>
<dbReference type="GO" id="GO:0046872">
    <property type="term" value="F:metal ion binding"/>
    <property type="evidence" value="ECO:0007669"/>
    <property type="project" value="UniProtKB-KW"/>
</dbReference>
<dbReference type="GO" id="GO:0000917">
    <property type="term" value="P:division septum assembly"/>
    <property type="evidence" value="ECO:0007669"/>
    <property type="project" value="UniProtKB-KW"/>
</dbReference>
<dbReference type="CDD" id="cd01876">
    <property type="entry name" value="YihA_EngB"/>
    <property type="match status" value="1"/>
</dbReference>
<dbReference type="FunFam" id="3.40.50.300:FF:000098">
    <property type="entry name" value="Probable GTP-binding protein EngB"/>
    <property type="match status" value="1"/>
</dbReference>
<dbReference type="Gene3D" id="3.40.50.300">
    <property type="entry name" value="P-loop containing nucleotide triphosphate hydrolases"/>
    <property type="match status" value="1"/>
</dbReference>
<dbReference type="HAMAP" id="MF_00321">
    <property type="entry name" value="GTPase_EngB"/>
    <property type="match status" value="1"/>
</dbReference>
<dbReference type="InterPro" id="IPR030393">
    <property type="entry name" value="G_ENGB_dom"/>
</dbReference>
<dbReference type="InterPro" id="IPR006073">
    <property type="entry name" value="GTP-bd"/>
</dbReference>
<dbReference type="InterPro" id="IPR019987">
    <property type="entry name" value="GTP-bd_ribosome_bio_YsxC"/>
</dbReference>
<dbReference type="InterPro" id="IPR027417">
    <property type="entry name" value="P-loop_NTPase"/>
</dbReference>
<dbReference type="InterPro" id="IPR005225">
    <property type="entry name" value="Small_GTP-bd"/>
</dbReference>
<dbReference type="NCBIfam" id="TIGR03598">
    <property type="entry name" value="GTPase_YsxC"/>
    <property type="match status" value="1"/>
</dbReference>
<dbReference type="NCBIfam" id="TIGR00231">
    <property type="entry name" value="small_GTP"/>
    <property type="match status" value="1"/>
</dbReference>
<dbReference type="PANTHER" id="PTHR11649:SF13">
    <property type="entry name" value="ENGB-TYPE G DOMAIN-CONTAINING PROTEIN"/>
    <property type="match status" value="1"/>
</dbReference>
<dbReference type="PANTHER" id="PTHR11649">
    <property type="entry name" value="MSS1/TRME-RELATED GTP-BINDING PROTEIN"/>
    <property type="match status" value="1"/>
</dbReference>
<dbReference type="Pfam" id="PF01926">
    <property type="entry name" value="MMR_HSR1"/>
    <property type="match status" value="1"/>
</dbReference>
<dbReference type="SUPFAM" id="SSF52540">
    <property type="entry name" value="P-loop containing nucleoside triphosphate hydrolases"/>
    <property type="match status" value="1"/>
</dbReference>
<dbReference type="PROSITE" id="PS51706">
    <property type="entry name" value="G_ENGB"/>
    <property type="match status" value="1"/>
</dbReference>
<gene>
    <name evidence="1" type="primary">engB</name>
    <name type="ordered locus">SpyM51116</name>
</gene>
<accession>A2RF16</accession>